<feature type="chain" id="PRO_1000142837" description="Large ribosomal subunit protein uL15">
    <location>
        <begin position="1"/>
        <end position="146"/>
    </location>
</feature>
<feature type="region of interest" description="Disordered" evidence="2">
    <location>
        <begin position="1"/>
        <end position="60"/>
    </location>
</feature>
<feature type="compositionally biased region" description="Basic and acidic residues" evidence="2">
    <location>
        <begin position="1"/>
        <end position="13"/>
    </location>
</feature>
<feature type="compositionally biased region" description="Gly residues" evidence="2">
    <location>
        <begin position="21"/>
        <end position="31"/>
    </location>
</feature>
<feature type="compositionally biased region" description="Gly residues" evidence="2">
    <location>
        <begin position="42"/>
        <end position="52"/>
    </location>
</feature>
<protein>
    <recommendedName>
        <fullName evidence="1">Large ribosomal subunit protein uL15</fullName>
    </recommendedName>
    <alternativeName>
        <fullName evidence="3">50S ribosomal protein L15</fullName>
    </alternativeName>
</protein>
<reference key="1">
    <citation type="journal article" date="2008" name="J. Bacteriol.">
        <title>Complete genome sequence of the mosquitocidal bacterium Bacillus sphaericus C3-41 and comparison with those of closely related Bacillus species.</title>
        <authorList>
            <person name="Hu X."/>
            <person name="Fan W."/>
            <person name="Han B."/>
            <person name="Liu H."/>
            <person name="Zheng D."/>
            <person name="Li Q."/>
            <person name="Dong W."/>
            <person name="Yan J."/>
            <person name="Gao M."/>
            <person name="Berry C."/>
            <person name="Yuan Z."/>
        </authorList>
    </citation>
    <scope>NUCLEOTIDE SEQUENCE [LARGE SCALE GENOMIC DNA]</scope>
    <source>
        <strain>C3-41</strain>
    </source>
</reference>
<accession>B1HMW1</accession>
<gene>
    <name evidence="1" type="primary">rplO</name>
    <name type="ordered locus">Bsph_4595</name>
</gene>
<name>RL15_LYSSC</name>
<dbReference type="EMBL" id="CP000817">
    <property type="protein sequence ID" value="ACA42039.1"/>
    <property type="molecule type" value="Genomic_DNA"/>
</dbReference>
<dbReference type="RefSeq" id="WP_008181708.1">
    <property type="nucleotide sequence ID" value="NC_010382.1"/>
</dbReference>
<dbReference type="SMR" id="B1HMW1"/>
<dbReference type="EnsemblBacteria" id="ACA42039">
    <property type="protein sequence ID" value="ACA42039"/>
    <property type="gene ID" value="Bsph_4595"/>
</dbReference>
<dbReference type="GeneID" id="29442743"/>
<dbReference type="KEGG" id="lsp:Bsph_4595"/>
<dbReference type="HOGENOM" id="CLU_055188_4_2_9"/>
<dbReference type="Proteomes" id="UP000002164">
    <property type="component" value="Chromosome"/>
</dbReference>
<dbReference type="GO" id="GO:0022625">
    <property type="term" value="C:cytosolic large ribosomal subunit"/>
    <property type="evidence" value="ECO:0007669"/>
    <property type="project" value="TreeGrafter"/>
</dbReference>
<dbReference type="GO" id="GO:0019843">
    <property type="term" value="F:rRNA binding"/>
    <property type="evidence" value="ECO:0007669"/>
    <property type="project" value="UniProtKB-UniRule"/>
</dbReference>
<dbReference type="GO" id="GO:0003735">
    <property type="term" value="F:structural constituent of ribosome"/>
    <property type="evidence" value="ECO:0007669"/>
    <property type="project" value="InterPro"/>
</dbReference>
<dbReference type="GO" id="GO:0006412">
    <property type="term" value="P:translation"/>
    <property type="evidence" value="ECO:0007669"/>
    <property type="project" value="UniProtKB-UniRule"/>
</dbReference>
<dbReference type="FunFam" id="3.100.10.10:FF:000004">
    <property type="entry name" value="50S ribosomal protein L15"/>
    <property type="match status" value="1"/>
</dbReference>
<dbReference type="Gene3D" id="3.100.10.10">
    <property type="match status" value="1"/>
</dbReference>
<dbReference type="HAMAP" id="MF_01341">
    <property type="entry name" value="Ribosomal_uL15"/>
    <property type="match status" value="1"/>
</dbReference>
<dbReference type="InterPro" id="IPR030878">
    <property type="entry name" value="Ribosomal_uL15"/>
</dbReference>
<dbReference type="InterPro" id="IPR021131">
    <property type="entry name" value="Ribosomal_uL15/eL18"/>
</dbReference>
<dbReference type="InterPro" id="IPR036227">
    <property type="entry name" value="Ribosomal_uL15/eL18_sf"/>
</dbReference>
<dbReference type="InterPro" id="IPR005749">
    <property type="entry name" value="Ribosomal_uL15_bac-type"/>
</dbReference>
<dbReference type="InterPro" id="IPR001196">
    <property type="entry name" value="Ribosomal_uL15_CS"/>
</dbReference>
<dbReference type="NCBIfam" id="TIGR01071">
    <property type="entry name" value="rplO_bact"/>
    <property type="match status" value="1"/>
</dbReference>
<dbReference type="PANTHER" id="PTHR12934">
    <property type="entry name" value="50S RIBOSOMAL PROTEIN L15"/>
    <property type="match status" value="1"/>
</dbReference>
<dbReference type="PANTHER" id="PTHR12934:SF11">
    <property type="entry name" value="LARGE RIBOSOMAL SUBUNIT PROTEIN UL15M"/>
    <property type="match status" value="1"/>
</dbReference>
<dbReference type="Pfam" id="PF00828">
    <property type="entry name" value="Ribosomal_L27A"/>
    <property type="match status" value="1"/>
</dbReference>
<dbReference type="SUPFAM" id="SSF52080">
    <property type="entry name" value="Ribosomal proteins L15p and L18e"/>
    <property type="match status" value="1"/>
</dbReference>
<dbReference type="PROSITE" id="PS00475">
    <property type="entry name" value="RIBOSOMAL_L15"/>
    <property type="match status" value="1"/>
</dbReference>
<keyword id="KW-0687">Ribonucleoprotein</keyword>
<keyword id="KW-0689">Ribosomal protein</keyword>
<keyword id="KW-0694">RNA-binding</keyword>
<keyword id="KW-0699">rRNA-binding</keyword>
<comment type="function">
    <text evidence="1">Binds to the 23S rRNA.</text>
</comment>
<comment type="subunit">
    <text evidence="1">Part of the 50S ribosomal subunit.</text>
</comment>
<comment type="similarity">
    <text evidence="1">Belongs to the universal ribosomal protein uL15 family.</text>
</comment>
<evidence type="ECO:0000255" key="1">
    <source>
        <dbReference type="HAMAP-Rule" id="MF_01341"/>
    </source>
</evidence>
<evidence type="ECO:0000256" key="2">
    <source>
        <dbReference type="SAM" id="MobiDB-lite"/>
    </source>
</evidence>
<evidence type="ECO:0000305" key="3"/>
<proteinExistence type="inferred from homology"/>
<sequence>MKLHELKPAEGSRKQRNRVGRGIGSGNGKTAGKGHKGQNARSGGGVRPGFEGGQNPLFRRLPKRGFTNINRKEYAIVNLDALNRFEDGAEVTTALLLETGLVSNEKAGIKVLGNGTLNKKLTVKAHKFSASAKEAIENAGGTTEVI</sequence>
<organism>
    <name type="scientific">Lysinibacillus sphaericus (strain C3-41)</name>
    <dbReference type="NCBI Taxonomy" id="444177"/>
    <lineage>
        <taxon>Bacteria</taxon>
        <taxon>Bacillati</taxon>
        <taxon>Bacillota</taxon>
        <taxon>Bacilli</taxon>
        <taxon>Bacillales</taxon>
        <taxon>Bacillaceae</taxon>
        <taxon>Lysinibacillus</taxon>
    </lineage>
</organism>